<evidence type="ECO:0000250" key="1"/>
<evidence type="ECO:0000305" key="2"/>
<reference key="1">
    <citation type="journal article" date="2007" name="Photosyn. Res.">
        <title>Complete nucleotide sequence of the freshwater unicellular cyanobacterium Synechococcus elongatus PCC 6301 chromosome: gene content and organization.</title>
        <authorList>
            <person name="Sugita C."/>
            <person name="Ogata K."/>
            <person name="Shikata M."/>
            <person name="Jikuya H."/>
            <person name="Takano J."/>
            <person name="Furumichi M."/>
            <person name="Kanehisa M."/>
            <person name="Omata T."/>
            <person name="Sugiura M."/>
            <person name="Sugita M."/>
        </authorList>
    </citation>
    <scope>NUCLEOTIDE SEQUENCE [LARGE SCALE GENOMIC DNA]</scope>
    <source>
        <strain>ATCC 27144 / PCC 6301 / SAUG 1402/1</strain>
    </source>
</reference>
<reference key="2">
    <citation type="journal article" date="1993" name="Plant Physiol.">
        <title>Nucleotide sequence of the psaE gene of cyanobacterium Synechococcus sp. PCC 6301.</title>
        <authorList>
            <person name="Rhiel E."/>
            <person name="Bryant D.A."/>
        </authorList>
    </citation>
    <scope>NUCLEOTIDE SEQUENCE [GENOMIC DNA] OF 1-47</scope>
</reference>
<comment type="function">
    <text evidence="1">Involved in base excision repair of DNA damaged by oxidation or by mutagenic agents. Acts as a DNA glycosylase that recognizes and removes damaged bases. Has a preference for oxidized purines, such as 7,8-dihydro-8-oxoguanine (8-oxoG). Has AP (apurinic/apyrimidinic) lyase activity and introduces nicks in the DNA strand. Cleaves the DNA backbone by beta-delta elimination to generate a single-strand break at the site of the removed base with both 3'- and 5'-phosphates (By similarity).</text>
</comment>
<comment type="catalytic activity">
    <reaction>
        <text>Hydrolysis of DNA containing ring-opened 7-methylguanine residues, releasing 2,6-diamino-4-hydroxy-5-(N-methyl)formamidopyrimidine.</text>
        <dbReference type="EC" id="3.2.2.23"/>
    </reaction>
</comment>
<comment type="catalytic activity">
    <reaction>
        <text>2'-deoxyribonucleotide-(2'-deoxyribose 5'-phosphate)-2'-deoxyribonucleotide-DNA = a 3'-end 2'-deoxyribonucleotide-(2,3-dehydro-2,3-deoxyribose 5'-phosphate)-DNA + a 5'-end 5'-phospho-2'-deoxyribonucleoside-DNA + H(+)</text>
        <dbReference type="Rhea" id="RHEA:66592"/>
        <dbReference type="Rhea" id="RHEA-COMP:13180"/>
        <dbReference type="Rhea" id="RHEA-COMP:16897"/>
        <dbReference type="Rhea" id="RHEA-COMP:17067"/>
        <dbReference type="ChEBI" id="CHEBI:15378"/>
        <dbReference type="ChEBI" id="CHEBI:136412"/>
        <dbReference type="ChEBI" id="CHEBI:157695"/>
        <dbReference type="ChEBI" id="CHEBI:167181"/>
        <dbReference type="EC" id="4.2.99.18"/>
    </reaction>
</comment>
<comment type="cofactor">
    <cofactor evidence="1">
        <name>Zn(2+)</name>
        <dbReference type="ChEBI" id="CHEBI:29105"/>
    </cofactor>
    <text evidence="1">Binds 1 zinc ion per subunit.</text>
</comment>
<comment type="subunit">
    <text evidence="1">Monomer.</text>
</comment>
<comment type="similarity">
    <text evidence="2">Belongs to the FPG family.</text>
</comment>
<comment type="sequence caution" evidence="2">
    <conflict type="erroneous initiation">
        <sequence resource="EMBL-CDS" id="BAD78420"/>
    </conflict>
</comment>
<feature type="initiator methionine" description="Removed" evidence="1">
    <location>
        <position position="1"/>
    </location>
</feature>
<feature type="chain" id="PRO_0000170877" description="Formamidopyrimidine-DNA glycosylase">
    <location>
        <begin position="2"/>
        <end position="282"/>
    </location>
</feature>
<feature type="zinc finger region" description="FPG-type">
    <location>
        <begin position="246"/>
        <end position="280"/>
    </location>
</feature>
<feature type="active site" description="Schiff-base intermediate with DNA" evidence="1">
    <location>
        <position position="2"/>
    </location>
</feature>
<feature type="active site" description="Proton donor" evidence="1">
    <location>
        <position position="3"/>
    </location>
</feature>
<feature type="active site" description="Proton donor; for beta-elimination activity" evidence="1">
    <location>
        <position position="59"/>
    </location>
</feature>
<feature type="active site" description="Proton donor; for delta-elimination activity" evidence="1">
    <location>
        <position position="270"/>
    </location>
</feature>
<feature type="binding site" evidence="1">
    <location>
        <position position="97"/>
    </location>
    <ligand>
        <name>DNA</name>
        <dbReference type="ChEBI" id="CHEBI:16991"/>
    </ligand>
</feature>
<feature type="binding site" evidence="1">
    <location>
        <position position="116"/>
    </location>
    <ligand>
        <name>DNA</name>
        <dbReference type="ChEBI" id="CHEBI:16991"/>
    </ligand>
</feature>
<accession>Q08079</accession>
<accession>Q5N5J8</accession>
<gene>
    <name type="primary">mutM</name>
    <name type="synonym">fpg</name>
    <name type="ordered locus">syc0230_c</name>
</gene>
<sequence>MPELPEVETVRRGLTQQTLQRVCTGGEVLLSRTIATPTPELFLVALQQTQIQEWRRRGKYLLADLSREGEPAGTWGVHLRMTGQFFWTEPATPLTKHTRVRLRFEGDRELRFIDIRSFGQMWWVPPDRPVESVITGLSKLGPEPFAPEFTARYLRDRLRRSQRPIKTALLDQSLVAGIGNIYADESLFRTGIHPTTPSDRLTKIQAEKLREAIVEVLTASIGAGGTTFSDFRDLTGVNGNYGGQAWVYGRKDQPCRTCGTPIQKLKLAGRSSHFCPRCQPCS</sequence>
<protein>
    <recommendedName>
        <fullName>Formamidopyrimidine-DNA glycosylase</fullName>
        <shortName>Fapy-DNA glycosylase</shortName>
        <ecNumber>3.2.2.23</ecNumber>
    </recommendedName>
    <alternativeName>
        <fullName>DNA-(apurinic or apyrimidinic site) lyase MutM</fullName>
        <shortName>AP lyase MutM</shortName>
        <ecNumber>4.2.99.18</ecNumber>
    </alternativeName>
</protein>
<organism>
    <name type="scientific">Synechococcus sp. (strain ATCC 27144 / PCC 6301 / SAUG 1402/1)</name>
    <name type="common">Anacystis nidulans</name>
    <dbReference type="NCBI Taxonomy" id="269084"/>
    <lineage>
        <taxon>Bacteria</taxon>
        <taxon>Bacillati</taxon>
        <taxon>Cyanobacteriota</taxon>
        <taxon>Cyanophyceae</taxon>
        <taxon>Synechococcales</taxon>
        <taxon>Synechococcaceae</taxon>
        <taxon>Synechococcus</taxon>
    </lineage>
</organism>
<proteinExistence type="inferred from homology"/>
<dbReference type="EC" id="3.2.2.23"/>
<dbReference type="EC" id="4.2.99.18"/>
<dbReference type="EMBL" id="AP008231">
    <property type="protein sequence ID" value="BAD78420.1"/>
    <property type="status" value="ALT_INIT"/>
    <property type="molecule type" value="Genomic_DNA"/>
</dbReference>
<dbReference type="EMBL" id="M99432">
    <property type="protein sequence ID" value="AAA18569.2"/>
    <property type="molecule type" value="Genomic_DNA"/>
</dbReference>
<dbReference type="RefSeq" id="WP_011377983.1">
    <property type="nucleotide sequence ID" value="NZ_CP085785.1"/>
</dbReference>
<dbReference type="SMR" id="Q08079"/>
<dbReference type="KEGG" id="syc:syc0230_c"/>
<dbReference type="eggNOG" id="COG0266">
    <property type="taxonomic scope" value="Bacteria"/>
</dbReference>
<dbReference type="Proteomes" id="UP000001175">
    <property type="component" value="Chromosome"/>
</dbReference>
<dbReference type="GO" id="GO:0034039">
    <property type="term" value="F:8-oxo-7,8-dihydroguanine DNA N-glycosylase activity"/>
    <property type="evidence" value="ECO:0007669"/>
    <property type="project" value="TreeGrafter"/>
</dbReference>
<dbReference type="GO" id="GO:0140078">
    <property type="term" value="F:class I DNA-(apurinic or apyrimidinic site) endonuclease activity"/>
    <property type="evidence" value="ECO:0007669"/>
    <property type="project" value="UniProtKB-EC"/>
</dbReference>
<dbReference type="GO" id="GO:0003684">
    <property type="term" value="F:damaged DNA binding"/>
    <property type="evidence" value="ECO:0007669"/>
    <property type="project" value="InterPro"/>
</dbReference>
<dbReference type="GO" id="GO:0008270">
    <property type="term" value="F:zinc ion binding"/>
    <property type="evidence" value="ECO:0007669"/>
    <property type="project" value="UniProtKB-UniRule"/>
</dbReference>
<dbReference type="GO" id="GO:0006284">
    <property type="term" value="P:base-excision repair"/>
    <property type="evidence" value="ECO:0007669"/>
    <property type="project" value="InterPro"/>
</dbReference>
<dbReference type="CDD" id="cd08966">
    <property type="entry name" value="EcFpg-like_N"/>
    <property type="match status" value="1"/>
</dbReference>
<dbReference type="FunFam" id="1.10.8.50:FF:000003">
    <property type="entry name" value="Formamidopyrimidine-DNA glycosylase"/>
    <property type="match status" value="1"/>
</dbReference>
<dbReference type="Gene3D" id="1.10.8.50">
    <property type="match status" value="1"/>
</dbReference>
<dbReference type="Gene3D" id="3.20.190.10">
    <property type="entry name" value="MutM-like, N-terminal"/>
    <property type="match status" value="1"/>
</dbReference>
<dbReference type="HAMAP" id="MF_00103">
    <property type="entry name" value="Fapy_DNA_glycosyl"/>
    <property type="match status" value="1"/>
</dbReference>
<dbReference type="InterPro" id="IPR015886">
    <property type="entry name" value="DNA_glyclase/AP_lyase_DNA-bd"/>
</dbReference>
<dbReference type="InterPro" id="IPR015887">
    <property type="entry name" value="DNA_glyclase_Znf_dom_DNA_BS"/>
</dbReference>
<dbReference type="InterPro" id="IPR020629">
    <property type="entry name" value="Formamido-pyr_DNA_Glyclase"/>
</dbReference>
<dbReference type="InterPro" id="IPR012319">
    <property type="entry name" value="FPG_cat"/>
</dbReference>
<dbReference type="InterPro" id="IPR035937">
    <property type="entry name" value="MutM-like_N-ter"/>
</dbReference>
<dbReference type="InterPro" id="IPR010979">
    <property type="entry name" value="Ribosomal_uS13-like_H2TH"/>
</dbReference>
<dbReference type="InterPro" id="IPR000214">
    <property type="entry name" value="Znf_DNA_glyclase/AP_lyase"/>
</dbReference>
<dbReference type="InterPro" id="IPR010663">
    <property type="entry name" value="Znf_FPG/IleRS"/>
</dbReference>
<dbReference type="NCBIfam" id="TIGR00577">
    <property type="entry name" value="fpg"/>
    <property type="match status" value="1"/>
</dbReference>
<dbReference type="NCBIfam" id="NF002211">
    <property type="entry name" value="PRK01103.1"/>
    <property type="match status" value="1"/>
</dbReference>
<dbReference type="NCBIfam" id="NF010551">
    <property type="entry name" value="PRK13945.1"/>
    <property type="match status" value="1"/>
</dbReference>
<dbReference type="PANTHER" id="PTHR22993">
    <property type="entry name" value="FORMAMIDOPYRIMIDINE-DNA GLYCOSYLASE"/>
    <property type="match status" value="1"/>
</dbReference>
<dbReference type="PANTHER" id="PTHR22993:SF9">
    <property type="entry name" value="FORMAMIDOPYRIMIDINE-DNA GLYCOSYLASE"/>
    <property type="match status" value="1"/>
</dbReference>
<dbReference type="Pfam" id="PF01149">
    <property type="entry name" value="Fapy_DNA_glyco"/>
    <property type="match status" value="1"/>
</dbReference>
<dbReference type="Pfam" id="PF06831">
    <property type="entry name" value="H2TH"/>
    <property type="match status" value="1"/>
</dbReference>
<dbReference type="Pfam" id="PF06827">
    <property type="entry name" value="zf-FPG_IleRS"/>
    <property type="match status" value="1"/>
</dbReference>
<dbReference type="SMART" id="SM00898">
    <property type="entry name" value="Fapy_DNA_glyco"/>
    <property type="match status" value="1"/>
</dbReference>
<dbReference type="SMART" id="SM01232">
    <property type="entry name" value="H2TH"/>
    <property type="match status" value="1"/>
</dbReference>
<dbReference type="SUPFAM" id="SSF57716">
    <property type="entry name" value="Glucocorticoid receptor-like (DNA-binding domain)"/>
    <property type="match status" value="1"/>
</dbReference>
<dbReference type="SUPFAM" id="SSF81624">
    <property type="entry name" value="N-terminal domain of MutM-like DNA repair proteins"/>
    <property type="match status" value="1"/>
</dbReference>
<dbReference type="SUPFAM" id="SSF46946">
    <property type="entry name" value="S13-like H2TH domain"/>
    <property type="match status" value="1"/>
</dbReference>
<dbReference type="PROSITE" id="PS51068">
    <property type="entry name" value="FPG_CAT"/>
    <property type="match status" value="1"/>
</dbReference>
<dbReference type="PROSITE" id="PS01242">
    <property type="entry name" value="ZF_FPG_1"/>
    <property type="match status" value="1"/>
</dbReference>
<dbReference type="PROSITE" id="PS51066">
    <property type="entry name" value="ZF_FPG_2"/>
    <property type="match status" value="1"/>
</dbReference>
<keyword id="KW-0227">DNA damage</keyword>
<keyword id="KW-0234">DNA repair</keyword>
<keyword id="KW-0238">DNA-binding</keyword>
<keyword id="KW-0326">Glycosidase</keyword>
<keyword id="KW-0378">Hydrolase</keyword>
<keyword id="KW-0456">Lyase</keyword>
<keyword id="KW-0479">Metal-binding</keyword>
<keyword id="KW-0511">Multifunctional enzyme</keyword>
<keyword id="KW-0862">Zinc</keyword>
<keyword id="KW-0863">Zinc-finger</keyword>
<name>FPG_SYNP6</name>